<sequence>MKIDGYTRMAAVVANPIKHSLSPFIHNLAFDLTDENGVYLAWEVESKKLAAIVENVRNLDMYGLNISMPYKGEIIKFMDELSPAAELIGAVNTVVNHSGKLIGHNTDGIGFFNSLKKYDFKIENKQILVLGGGGAAIALIAQAALSGAKKIVVAARKSASYDPLNEKLAKLSAKTGVEILLTDLSGADRLQKELNQTDLLVNATSVGMDGASFPLEKSLLLPDKLLVVDAIYKVRETPFLHWAKEQGAQTENGLGMLIGQAAESFYLWTGKEMPVDKITLEMEREV</sequence>
<protein>
    <recommendedName>
        <fullName evidence="1">Shikimate dehydrogenase (NADP(+))</fullName>
        <shortName evidence="1">SDH</shortName>
        <ecNumber evidence="1">1.1.1.25</ecNumber>
    </recommendedName>
</protein>
<organism>
    <name type="scientific">Lactococcus lactis subsp. cremoris (strain MG1363)</name>
    <dbReference type="NCBI Taxonomy" id="416870"/>
    <lineage>
        <taxon>Bacteria</taxon>
        <taxon>Bacillati</taxon>
        <taxon>Bacillota</taxon>
        <taxon>Bacilli</taxon>
        <taxon>Lactobacillales</taxon>
        <taxon>Streptococcaceae</taxon>
        <taxon>Lactococcus</taxon>
        <taxon>Lactococcus cremoris subsp. cremoris</taxon>
    </lineage>
</organism>
<proteinExistence type="inferred from homology"/>
<feature type="chain" id="PRO_1000021292" description="Shikimate dehydrogenase (NADP(+))">
    <location>
        <begin position="1"/>
        <end position="286"/>
    </location>
</feature>
<feature type="active site" description="Proton acceptor" evidence="1">
    <location>
        <position position="71"/>
    </location>
</feature>
<feature type="binding site" evidence="1">
    <location>
        <begin position="20"/>
        <end position="22"/>
    </location>
    <ligand>
        <name>shikimate</name>
        <dbReference type="ChEBI" id="CHEBI:36208"/>
    </ligand>
</feature>
<feature type="binding site" evidence="1">
    <location>
        <position position="67"/>
    </location>
    <ligand>
        <name>shikimate</name>
        <dbReference type="ChEBI" id="CHEBI:36208"/>
    </ligand>
</feature>
<feature type="binding site" evidence="1">
    <location>
        <position position="92"/>
    </location>
    <ligand>
        <name>shikimate</name>
        <dbReference type="ChEBI" id="CHEBI:36208"/>
    </ligand>
</feature>
<feature type="binding site" evidence="1">
    <location>
        <position position="107"/>
    </location>
    <ligand>
        <name>shikimate</name>
        <dbReference type="ChEBI" id="CHEBI:36208"/>
    </ligand>
</feature>
<feature type="binding site" evidence="1">
    <location>
        <begin position="131"/>
        <end position="135"/>
    </location>
    <ligand>
        <name>NADP(+)</name>
        <dbReference type="ChEBI" id="CHEBI:58349"/>
    </ligand>
</feature>
<feature type="binding site" evidence="1">
    <location>
        <position position="230"/>
    </location>
    <ligand>
        <name>NADP(+)</name>
        <dbReference type="ChEBI" id="CHEBI:58349"/>
    </ligand>
</feature>
<feature type="binding site" evidence="1">
    <location>
        <position position="232"/>
    </location>
    <ligand>
        <name>shikimate</name>
        <dbReference type="ChEBI" id="CHEBI:36208"/>
    </ligand>
</feature>
<feature type="binding site" evidence="1">
    <location>
        <position position="253"/>
    </location>
    <ligand>
        <name>NADP(+)</name>
        <dbReference type="ChEBI" id="CHEBI:58349"/>
    </ligand>
</feature>
<evidence type="ECO:0000255" key="1">
    <source>
        <dbReference type="HAMAP-Rule" id="MF_00222"/>
    </source>
</evidence>
<reference key="1">
    <citation type="journal article" date="2007" name="J. Bacteriol.">
        <title>The complete genome sequence of the lactic acid bacterial paradigm Lactococcus lactis subsp. cremoris MG1363.</title>
        <authorList>
            <person name="Wegmann U."/>
            <person name="O'Connell-Motherway M."/>
            <person name="Zomer A."/>
            <person name="Buist G."/>
            <person name="Shearman C."/>
            <person name="Canchaya C."/>
            <person name="Ventura M."/>
            <person name="Goesmann A."/>
            <person name="Gasson M.J."/>
            <person name="Kuipers O.P."/>
            <person name="van Sinderen D."/>
            <person name="Kok J."/>
        </authorList>
    </citation>
    <scope>NUCLEOTIDE SEQUENCE [LARGE SCALE GENOMIC DNA]</scope>
    <source>
        <strain>MG1363</strain>
    </source>
</reference>
<gene>
    <name evidence="1" type="primary">aroE</name>
    <name type="ordered locus">llmg_1939</name>
</gene>
<name>AROE_LACLM</name>
<comment type="function">
    <text evidence="1">Involved in the biosynthesis of the chorismate, which leads to the biosynthesis of aromatic amino acids. Catalyzes the reversible NADPH linked reduction of 3-dehydroshikimate (DHSA) to yield shikimate (SA).</text>
</comment>
<comment type="catalytic activity">
    <reaction evidence="1">
        <text>shikimate + NADP(+) = 3-dehydroshikimate + NADPH + H(+)</text>
        <dbReference type="Rhea" id="RHEA:17737"/>
        <dbReference type="ChEBI" id="CHEBI:15378"/>
        <dbReference type="ChEBI" id="CHEBI:16630"/>
        <dbReference type="ChEBI" id="CHEBI:36208"/>
        <dbReference type="ChEBI" id="CHEBI:57783"/>
        <dbReference type="ChEBI" id="CHEBI:58349"/>
        <dbReference type="EC" id="1.1.1.25"/>
    </reaction>
</comment>
<comment type="pathway">
    <text evidence="1">Metabolic intermediate biosynthesis; chorismate biosynthesis; chorismate from D-erythrose 4-phosphate and phosphoenolpyruvate: step 4/7.</text>
</comment>
<comment type="subunit">
    <text evidence="1">Homodimer.</text>
</comment>
<comment type="similarity">
    <text evidence="1">Belongs to the shikimate dehydrogenase family.</text>
</comment>
<accession>A2RMH6</accession>
<keyword id="KW-0028">Amino-acid biosynthesis</keyword>
<keyword id="KW-0057">Aromatic amino acid biosynthesis</keyword>
<keyword id="KW-0521">NADP</keyword>
<keyword id="KW-0560">Oxidoreductase</keyword>
<dbReference type="EC" id="1.1.1.25" evidence="1"/>
<dbReference type="EMBL" id="AM406671">
    <property type="protein sequence ID" value="CAL98508.1"/>
    <property type="molecule type" value="Genomic_DNA"/>
</dbReference>
<dbReference type="RefSeq" id="WP_011835684.1">
    <property type="nucleotide sequence ID" value="NC_009004.1"/>
</dbReference>
<dbReference type="SMR" id="A2RMH6"/>
<dbReference type="STRING" id="416870.llmg_1939"/>
<dbReference type="KEGG" id="llm:llmg_1939"/>
<dbReference type="eggNOG" id="COG0169">
    <property type="taxonomic scope" value="Bacteria"/>
</dbReference>
<dbReference type="HOGENOM" id="CLU_044063_4_1_9"/>
<dbReference type="OrthoDB" id="9792692at2"/>
<dbReference type="PhylomeDB" id="A2RMH6"/>
<dbReference type="UniPathway" id="UPA00053">
    <property type="reaction ID" value="UER00087"/>
</dbReference>
<dbReference type="Proteomes" id="UP000000364">
    <property type="component" value="Chromosome"/>
</dbReference>
<dbReference type="GO" id="GO:0050661">
    <property type="term" value="F:NADP binding"/>
    <property type="evidence" value="ECO:0007669"/>
    <property type="project" value="InterPro"/>
</dbReference>
<dbReference type="GO" id="GO:0004764">
    <property type="term" value="F:shikimate 3-dehydrogenase (NADP+) activity"/>
    <property type="evidence" value="ECO:0007669"/>
    <property type="project" value="UniProtKB-UniRule"/>
</dbReference>
<dbReference type="GO" id="GO:0008652">
    <property type="term" value="P:amino acid biosynthetic process"/>
    <property type="evidence" value="ECO:0007669"/>
    <property type="project" value="UniProtKB-KW"/>
</dbReference>
<dbReference type="GO" id="GO:0009073">
    <property type="term" value="P:aromatic amino acid family biosynthetic process"/>
    <property type="evidence" value="ECO:0007669"/>
    <property type="project" value="UniProtKB-KW"/>
</dbReference>
<dbReference type="GO" id="GO:0009423">
    <property type="term" value="P:chorismate biosynthetic process"/>
    <property type="evidence" value="ECO:0007669"/>
    <property type="project" value="UniProtKB-UniRule"/>
</dbReference>
<dbReference type="GO" id="GO:0019632">
    <property type="term" value="P:shikimate metabolic process"/>
    <property type="evidence" value="ECO:0007669"/>
    <property type="project" value="InterPro"/>
</dbReference>
<dbReference type="CDD" id="cd01065">
    <property type="entry name" value="NAD_bind_Shikimate_DH"/>
    <property type="match status" value="1"/>
</dbReference>
<dbReference type="Gene3D" id="3.40.50.10860">
    <property type="entry name" value="Leucine Dehydrogenase, chain A, domain 1"/>
    <property type="match status" value="1"/>
</dbReference>
<dbReference type="Gene3D" id="3.40.50.720">
    <property type="entry name" value="NAD(P)-binding Rossmann-like Domain"/>
    <property type="match status" value="1"/>
</dbReference>
<dbReference type="HAMAP" id="MF_00222">
    <property type="entry name" value="Shikimate_DH_AroE"/>
    <property type="match status" value="1"/>
</dbReference>
<dbReference type="InterPro" id="IPR046346">
    <property type="entry name" value="Aminoacid_DH-like_N_sf"/>
</dbReference>
<dbReference type="InterPro" id="IPR036291">
    <property type="entry name" value="NAD(P)-bd_dom_sf"/>
</dbReference>
<dbReference type="InterPro" id="IPR041121">
    <property type="entry name" value="SDH_C"/>
</dbReference>
<dbReference type="InterPro" id="IPR011342">
    <property type="entry name" value="Shikimate_DH"/>
</dbReference>
<dbReference type="InterPro" id="IPR013708">
    <property type="entry name" value="Shikimate_DH-bd_N"/>
</dbReference>
<dbReference type="InterPro" id="IPR022893">
    <property type="entry name" value="Shikimate_DH_fam"/>
</dbReference>
<dbReference type="NCBIfam" id="TIGR00507">
    <property type="entry name" value="aroE"/>
    <property type="match status" value="1"/>
</dbReference>
<dbReference type="NCBIfam" id="NF001315">
    <property type="entry name" value="PRK00258.2-4"/>
    <property type="match status" value="1"/>
</dbReference>
<dbReference type="PANTHER" id="PTHR21089:SF1">
    <property type="entry name" value="BIFUNCTIONAL 3-DEHYDROQUINATE DEHYDRATASE_SHIKIMATE DEHYDROGENASE, CHLOROPLASTIC"/>
    <property type="match status" value="1"/>
</dbReference>
<dbReference type="PANTHER" id="PTHR21089">
    <property type="entry name" value="SHIKIMATE DEHYDROGENASE"/>
    <property type="match status" value="1"/>
</dbReference>
<dbReference type="Pfam" id="PF18317">
    <property type="entry name" value="SDH_C"/>
    <property type="match status" value="1"/>
</dbReference>
<dbReference type="Pfam" id="PF08501">
    <property type="entry name" value="Shikimate_dh_N"/>
    <property type="match status" value="1"/>
</dbReference>
<dbReference type="SUPFAM" id="SSF53223">
    <property type="entry name" value="Aminoacid dehydrogenase-like, N-terminal domain"/>
    <property type="match status" value="1"/>
</dbReference>
<dbReference type="SUPFAM" id="SSF51735">
    <property type="entry name" value="NAD(P)-binding Rossmann-fold domains"/>
    <property type="match status" value="1"/>
</dbReference>